<feature type="chain" id="PRO_0000122680" description="Protein RecA">
    <location>
        <begin position="1"/>
        <end position="356"/>
    </location>
</feature>
<feature type="binding site" evidence="1">
    <location>
        <begin position="77"/>
        <end position="84"/>
    </location>
    <ligand>
        <name>ATP</name>
        <dbReference type="ChEBI" id="CHEBI:30616"/>
    </ligand>
</feature>
<proteinExistence type="inferred from homology"/>
<name>RECA_CAUVC</name>
<organism>
    <name type="scientific">Caulobacter vibrioides (strain ATCC 19089 / CIP 103742 / CB 15)</name>
    <name type="common">Caulobacter crescentus</name>
    <dbReference type="NCBI Taxonomy" id="190650"/>
    <lineage>
        <taxon>Bacteria</taxon>
        <taxon>Pseudomonadati</taxon>
        <taxon>Pseudomonadota</taxon>
        <taxon>Alphaproteobacteria</taxon>
        <taxon>Caulobacterales</taxon>
        <taxon>Caulobacteraceae</taxon>
        <taxon>Caulobacter</taxon>
    </lineage>
</organism>
<dbReference type="EMBL" id="AE005673">
    <property type="protein sequence ID" value="AAK23071.1"/>
    <property type="molecule type" value="Genomic_DNA"/>
</dbReference>
<dbReference type="PIR" id="C87384">
    <property type="entry name" value="C87384"/>
</dbReference>
<dbReference type="RefSeq" id="NP_419903.1">
    <property type="nucleotide sequence ID" value="NC_002696.2"/>
</dbReference>
<dbReference type="RefSeq" id="WP_010918971.1">
    <property type="nucleotide sequence ID" value="NC_002696.2"/>
</dbReference>
<dbReference type="SMR" id="Q9A9A7"/>
<dbReference type="STRING" id="190650.CC_1087"/>
<dbReference type="EnsemblBacteria" id="AAK23071">
    <property type="protein sequence ID" value="AAK23071"/>
    <property type="gene ID" value="CC_1087"/>
</dbReference>
<dbReference type="KEGG" id="ccr:CC_1087"/>
<dbReference type="PATRIC" id="fig|190650.5.peg.1106"/>
<dbReference type="eggNOG" id="COG0468">
    <property type="taxonomic scope" value="Bacteria"/>
</dbReference>
<dbReference type="HOGENOM" id="CLU_040469_3_2_5"/>
<dbReference type="BioCyc" id="CAULO:CC1087-MONOMER"/>
<dbReference type="Proteomes" id="UP000001816">
    <property type="component" value="Chromosome"/>
</dbReference>
<dbReference type="GO" id="GO:0005829">
    <property type="term" value="C:cytosol"/>
    <property type="evidence" value="ECO:0007669"/>
    <property type="project" value="TreeGrafter"/>
</dbReference>
<dbReference type="GO" id="GO:0005524">
    <property type="term" value="F:ATP binding"/>
    <property type="evidence" value="ECO:0007669"/>
    <property type="project" value="UniProtKB-UniRule"/>
</dbReference>
<dbReference type="GO" id="GO:0016887">
    <property type="term" value="F:ATP hydrolysis activity"/>
    <property type="evidence" value="ECO:0007669"/>
    <property type="project" value="InterPro"/>
</dbReference>
<dbReference type="GO" id="GO:0140664">
    <property type="term" value="F:ATP-dependent DNA damage sensor activity"/>
    <property type="evidence" value="ECO:0007669"/>
    <property type="project" value="InterPro"/>
</dbReference>
<dbReference type="GO" id="GO:0003684">
    <property type="term" value="F:damaged DNA binding"/>
    <property type="evidence" value="ECO:0007669"/>
    <property type="project" value="UniProtKB-UniRule"/>
</dbReference>
<dbReference type="GO" id="GO:0003697">
    <property type="term" value="F:single-stranded DNA binding"/>
    <property type="evidence" value="ECO:0007669"/>
    <property type="project" value="UniProtKB-UniRule"/>
</dbReference>
<dbReference type="GO" id="GO:0006310">
    <property type="term" value="P:DNA recombination"/>
    <property type="evidence" value="ECO:0007669"/>
    <property type="project" value="UniProtKB-UniRule"/>
</dbReference>
<dbReference type="GO" id="GO:0006281">
    <property type="term" value="P:DNA repair"/>
    <property type="evidence" value="ECO:0007669"/>
    <property type="project" value="UniProtKB-UniRule"/>
</dbReference>
<dbReference type="GO" id="GO:0009432">
    <property type="term" value="P:SOS response"/>
    <property type="evidence" value="ECO:0000269"/>
    <property type="project" value="CollecTF"/>
</dbReference>
<dbReference type="CDD" id="cd00983">
    <property type="entry name" value="RecA"/>
    <property type="match status" value="1"/>
</dbReference>
<dbReference type="FunFam" id="3.40.50.300:FF:000087">
    <property type="entry name" value="Recombinase RecA"/>
    <property type="match status" value="1"/>
</dbReference>
<dbReference type="Gene3D" id="3.40.50.300">
    <property type="entry name" value="P-loop containing nucleotide triphosphate hydrolases"/>
    <property type="match status" value="1"/>
</dbReference>
<dbReference type="HAMAP" id="MF_00268">
    <property type="entry name" value="RecA"/>
    <property type="match status" value="1"/>
</dbReference>
<dbReference type="InterPro" id="IPR003593">
    <property type="entry name" value="AAA+_ATPase"/>
</dbReference>
<dbReference type="InterPro" id="IPR013765">
    <property type="entry name" value="DNA_recomb/repair_RecA"/>
</dbReference>
<dbReference type="InterPro" id="IPR020584">
    <property type="entry name" value="DNA_recomb/repair_RecA_CS"/>
</dbReference>
<dbReference type="InterPro" id="IPR027417">
    <property type="entry name" value="P-loop_NTPase"/>
</dbReference>
<dbReference type="InterPro" id="IPR049261">
    <property type="entry name" value="RecA-like_C"/>
</dbReference>
<dbReference type="InterPro" id="IPR049428">
    <property type="entry name" value="RecA-like_N"/>
</dbReference>
<dbReference type="InterPro" id="IPR020588">
    <property type="entry name" value="RecA_ATP-bd"/>
</dbReference>
<dbReference type="InterPro" id="IPR023400">
    <property type="entry name" value="RecA_C_sf"/>
</dbReference>
<dbReference type="InterPro" id="IPR020587">
    <property type="entry name" value="RecA_monomer-monomer_interface"/>
</dbReference>
<dbReference type="NCBIfam" id="TIGR02012">
    <property type="entry name" value="tigrfam_recA"/>
    <property type="match status" value="1"/>
</dbReference>
<dbReference type="PANTHER" id="PTHR45900:SF1">
    <property type="entry name" value="MITOCHONDRIAL DNA REPAIR PROTEIN RECA HOMOLOG-RELATED"/>
    <property type="match status" value="1"/>
</dbReference>
<dbReference type="PANTHER" id="PTHR45900">
    <property type="entry name" value="RECA"/>
    <property type="match status" value="1"/>
</dbReference>
<dbReference type="Pfam" id="PF00154">
    <property type="entry name" value="RecA"/>
    <property type="match status" value="1"/>
</dbReference>
<dbReference type="Pfam" id="PF21096">
    <property type="entry name" value="RecA_C"/>
    <property type="match status" value="1"/>
</dbReference>
<dbReference type="PRINTS" id="PR00142">
    <property type="entry name" value="RECA"/>
</dbReference>
<dbReference type="SMART" id="SM00382">
    <property type="entry name" value="AAA"/>
    <property type="match status" value="1"/>
</dbReference>
<dbReference type="SUPFAM" id="SSF52540">
    <property type="entry name" value="P-loop containing nucleoside triphosphate hydrolases"/>
    <property type="match status" value="1"/>
</dbReference>
<dbReference type="SUPFAM" id="SSF54752">
    <property type="entry name" value="RecA protein, C-terminal domain"/>
    <property type="match status" value="1"/>
</dbReference>
<dbReference type="PROSITE" id="PS00321">
    <property type="entry name" value="RECA_1"/>
    <property type="match status" value="1"/>
</dbReference>
<dbReference type="PROSITE" id="PS50162">
    <property type="entry name" value="RECA_2"/>
    <property type="match status" value="1"/>
</dbReference>
<dbReference type="PROSITE" id="PS50163">
    <property type="entry name" value="RECA_3"/>
    <property type="match status" value="1"/>
</dbReference>
<evidence type="ECO:0000255" key="1">
    <source>
        <dbReference type="HAMAP-Rule" id="MF_00268"/>
    </source>
</evidence>
<reference key="1">
    <citation type="journal article" date="2001" name="Proc. Natl. Acad. Sci. U.S.A.">
        <title>Complete genome sequence of Caulobacter crescentus.</title>
        <authorList>
            <person name="Nierman W.C."/>
            <person name="Feldblyum T.V."/>
            <person name="Laub M.T."/>
            <person name="Paulsen I.T."/>
            <person name="Nelson K.E."/>
            <person name="Eisen J.A."/>
            <person name="Heidelberg J.F."/>
            <person name="Alley M.R.K."/>
            <person name="Ohta N."/>
            <person name="Maddock J.R."/>
            <person name="Potocka I."/>
            <person name="Nelson W.C."/>
            <person name="Newton A."/>
            <person name="Stephens C."/>
            <person name="Phadke N.D."/>
            <person name="Ely B."/>
            <person name="DeBoy R.T."/>
            <person name="Dodson R.J."/>
            <person name="Durkin A.S."/>
            <person name="Gwinn M.L."/>
            <person name="Haft D.H."/>
            <person name="Kolonay J.F."/>
            <person name="Smit J."/>
            <person name="Craven M.B."/>
            <person name="Khouri H.M."/>
            <person name="Shetty J."/>
            <person name="Berry K.J."/>
            <person name="Utterback T.R."/>
            <person name="Tran K."/>
            <person name="Wolf A.M."/>
            <person name="Vamathevan J.J."/>
            <person name="Ermolaeva M.D."/>
            <person name="White O."/>
            <person name="Salzberg S.L."/>
            <person name="Venter J.C."/>
            <person name="Shapiro L."/>
            <person name="Fraser C.M."/>
        </authorList>
    </citation>
    <scope>NUCLEOTIDE SEQUENCE [LARGE SCALE GENOMIC DNA]</scope>
    <source>
        <strain>ATCC 19089 / CIP 103742 / CB 15</strain>
    </source>
</reference>
<sequence>MTSQAALKLVAKEEGDKQRALEAALAQIDRAFGKGSVMKLGEKGKVEIESVSTGSLGLDIALGIGGLPKGRIVEVYGPESSGKTTLALHVVAEVQKAGGTAAFVDAEHALDPSYAYKLGVNLDNLLVSQPDNGEQALEITDTLVRSGAVDIVVVDSVAALTPKAEIEGEMGDSLPGLQARLMSQALRKLTASINKANTIVIFINQIRHKIGVMYGSPETTTGGNALKFYASVRLDIRRTGSVKARDEIVGNNVRVKVVKNKVAPPFREVEFDIMYGEGISKLGEVIDLGVKAGIIDKAGSWFSYGSQRIGQGRDNVREFLKNNPDVAADIEKAVRKSSQKIEEELLVGGPEEGEED</sequence>
<gene>
    <name evidence="1" type="primary">recA</name>
    <name type="ordered locus">CC_1087</name>
</gene>
<accession>Q9A9A7</accession>
<keyword id="KW-0067">ATP-binding</keyword>
<keyword id="KW-0963">Cytoplasm</keyword>
<keyword id="KW-0227">DNA damage</keyword>
<keyword id="KW-0233">DNA recombination</keyword>
<keyword id="KW-0234">DNA repair</keyword>
<keyword id="KW-0238">DNA-binding</keyword>
<keyword id="KW-0547">Nucleotide-binding</keyword>
<keyword id="KW-1185">Reference proteome</keyword>
<keyword id="KW-0742">SOS response</keyword>
<comment type="function">
    <text evidence="1">Can catalyze the hydrolysis of ATP in the presence of single-stranded DNA, the ATP-dependent uptake of single-stranded DNA by duplex DNA, and the ATP-dependent hybridization of homologous single-stranded DNAs. It interacts with LexA causing its activation and leading to its autocatalytic cleavage.</text>
</comment>
<comment type="subcellular location">
    <subcellularLocation>
        <location evidence="1">Cytoplasm</location>
    </subcellularLocation>
</comment>
<comment type="similarity">
    <text evidence="1">Belongs to the RecA family.</text>
</comment>
<protein>
    <recommendedName>
        <fullName evidence="1">Protein RecA</fullName>
    </recommendedName>
    <alternativeName>
        <fullName evidence="1">Recombinase A</fullName>
    </alternativeName>
</protein>